<comment type="function">
    <text evidence="1">Catalyzes the ATP-dependent transfer of a sulfur to tRNA to produce 4-thiouridine in position 8 of tRNAs, which functions as a near-UV photosensor. Also catalyzes the transfer of sulfur to the sulfur carrier protein ThiS, forming ThiS-thiocarboxylate. This is a step in the synthesis of thiazole, in the thiamine biosynthesis pathway. The sulfur is donated as persulfide by IscS.</text>
</comment>
<comment type="catalytic activity">
    <reaction evidence="1">
        <text>[ThiI sulfur-carrier protein]-S-sulfanyl-L-cysteine + a uridine in tRNA + 2 reduced [2Fe-2S]-[ferredoxin] + ATP + H(+) = [ThiI sulfur-carrier protein]-L-cysteine + a 4-thiouridine in tRNA + 2 oxidized [2Fe-2S]-[ferredoxin] + AMP + diphosphate</text>
        <dbReference type="Rhea" id="RHEA:24176"/>
        <dbReference type="Rhea" id="RHEA-COMP:10000"/>
        <dbReference type="Rhea" id="RHEA-COMP:10001"/>
        <dbReference type="Rhea" id="RHEA-COMP:13337"/>
        <dbReference type="Rhea" id="RHEA-COMP:13338"/>
        <dbReference type="Rhea" id="RHEA-COMP:13339"/>
        <dbReference type="Rhea" id="RHEA-COMP:13340"/>
        <dbReference type="ChEBI" id="CHEBI:15378"/>
        <dbReference type="ChEBI" id="CHEBI:29950"/>
        <dbReference type="ChEBI" id="CHEBI:30616"/>
        <dbReference type="ChEBI" id="CHEBI:33019"/>
        <dbReference type="ChEBI" id="CHEBI:33737"/>
        <dbReference type="ChEBI" id="CHEBI:33738"/>
        <dbReference type="ChEBI" id="CHEBI:61963"/>
        <dbReference type="ChEBI" id="CHEBI:65315"/>
        <dbReference type="ChEBI" id="CHEBI:136798"/>
        <dbReference type="ChEBI" id="CHEBI:456215"/>
        <dbReference type="EC" id="2.8.1.4"/>
    </reaction>
</comment>
<comment type="catalytic activity">
    <reaction evidence="1">
        <text>[ThiS sulfur-carrier protein]-C-terminal Gly-Gly-AMP + S-sulfanyl-L-cysteinyl-[cysteine desulfurase] + AH2 = [ThiS sulfur-carrier protein]-C-terminal-Gly-aminoethanethioate + L-cysteinyl-[cysteine desulfurase] + A + AMP + 2 H(+)</text>
        <dbReference type="Rhea" id="RHEA:43340"/>
        <dbReference type="Rhea" id="RHEA-COMP:12157"/>
        <dbReference type="Rhea" id="RHEA-COMP:12158"/>
        <dbReference type="Rhea" id="RHEA-COMP:12910"/>
        <dbReference type="Rhea" id="RHEA-COMP:19908"/>
        <dbReference type="ChEBI" id="CHEBI:13193"/>
        <dbReference type="ChEBI" id="CHEBI:15378"/>
        <dbReference type="ChEBI" id="CHEBI:17499"/>
        <dbReference type="ChEBI" id="CHEBI:29950"/>
        <dbReference type="ChEBI" id="CHEBI:61963"/>
        <dbReference type="ChEBI" id="CHEBI:90618"/>
        <dbReference type="ChEBI" id="CHEBI:232372"/>
        <dbReference type="ChEBI" id="CHEBI:456215"/>
    </reaction>
</comment>
<comment type="pathway">
    <text evidence="1">Cofactor biosynthesis; thiamine diphosphate biosynthesis.</text>
</comment>
<comment type="subcellular location">
    <subcellularLocation>
        <location evidence="1">Cytoplasm</location>
    </subcellularLocation>
</comment>
<comment type="similarity">
    <text evidence="1">Belongs to the ThiI family.</text>
</comment>
<protein>
    <recommendedName>
        <fullName evidence="1">Probable tRNA sulfurtransferase</fullName>
        <ecNumber evidence="1">2.8.1.4</ecNumber>
    </recommendedName>
    <alternativeName>
        <fullName evidence="1">Sulfur carrier protein ThiS sulfurtransferase</fullName>
    </alternativeName>
    <alternativeName>
        <fullName evidence="1">Thiamine biosynthesis protein ThiI</fullName>
    </alternativeName>
    <alternativeName>
        <fullName evidence="1">tRNA 4-thiouridine synthase</fullName>
    </alternativeName>
</protein>
<sequence>MKYDHLLVRYGELTLKGSNRKKFVNQLRNNVNKSLKGLDGFVVKGKRDRMYIELEDHADINEITYRLSKIFGIKSISPVLKVEKTIEAMSAAAIKFAQQFEENSTFKIDVKRADKNFPMDTYELQRELGGTVLKQIENVSVNVKRADHEIRVEVRLDAIYMYEEVVPGSGGLPVGTGGKTLLMLSGGIDSPVAGMEVMRRGVTIEAIHFHSPPFTSDQAKEKVIELTRILAERVGPIKLHIVPFTELQKQVNKVVHPRYTMTSTRRMMMRVADKLVHQIGALAIVNGENLGQVASQTLHSMYAINNVTSTPVLRPLLTYDKEEIIIKSKEIGTFETSIQPFEDCCTIFTPKNPVTEPNFEKVVQYESVFDFEEMINRAVENIETLEITSDYKTIKEQQTNQLINDFL</sequence>
<name>THII_STAAN</name>
<organism>
    <name type="scientific">Staphylococcus aureus (strain N315)</name>
    <dbReference type="NCBI Taxonomy" id="158879"/>
    <lineage>
        <taxon>Bacteria</taxon>
        <taxon>Bacillati</taxon>
        <taxon>Bacillota</taxon>
        <taxon>Bacilli</taxon>
        <taxon>Bacillales</taxon>
        <taxon>Staphylococcaceae</taxon>
        <taxon>Staphylococcus</taxon>
    </lineage>
</organism>
<evidence type="ECO:0000255" key="1">
    <source>
        <dbReference type="HAMAP-Rule" id="MF_00021"/>
    </source>
</evidence>
<keyword id="KW-0067">ATP-binding</keyword>
<keyword id="KW-0963">Cytoplasm</keyword>
<keyword id="KW-0547">Nucleotide-binding</keyword>
<keyword id="KW-0694">RNA-binding</keyword>
<keyword id="KW-0784">Thiamine biosynthesis</keyword>
<keyword id="KW-0808">Transferase</keyword>
<keyword id="KW-0820">tRNA-binding</keyword>
<dbReference type="EC" id="2.8.1.4" evidence="1"/>
<dbReference type="EMBL" id="BA000018">
    <property type="protein sequence ID" value="BAB42804.1"/>
    <property type="molecule type" value="Genomic_DNA"/>
</dbReference>
<dbReference type="PIR" id="G89955">
    <property type="entry name" value="G89955"/>
</dbReference>
<dbReference type="RefSeq" id="WP_000872660.1">
    <property type="nucleotide sequence ID" value="NC_002745.2"/>
</dbReference>
<dbReference type="SMR" id="Q99TE8"/>
<dbReference type="EnsemblBacteria" id="BAB42804">
    <property type="protein sequence ID" value="BAB42804"/>
    <property type="gene ID" value="BAB42804"/>
</dbReference>
<dbReference type="KEGG" id="sau:SA1537"/>
<dbReference type="HOGENOM" id="CLU_037952_4_0_9"/>
<dbReference type="UniPathway" id="UPA00060"/>
<dbReference type="GO" id="GO:0005829">
    <property type="term" value="C:cytosol"/>
    <property type="evidence" value="ECO:0007669"/>
    <property type="project" value="TreeGrafter"/>
</dbReference>
<dbReference type="GO" id="GO:0005524">
    <property type="term" value="F:ATP binding"/>
    <property type="evidence" value="ECO:0007669"/>
    <property type="project" value="UniProtKB-UniRule"/>
</dbReference>
<dbReference type="GO" id="GO:0004810">
    <property type="term" value="F:CCA tRNA nucleotidyltransferase activity"/>
    <property type="evidence" value="ECO:0007669"/>
    <property type="project" value="InterPro"/>
</dbReference>
<dbReference type="GO" id="GO:0000049">
    <property type="term" value="F:tRNA binding"/>
    <property type="evidence" value="ECO:0007669"/>
    <property type="project" value="UniProtKB-UniRule"/>
</dbReference>
<dbReference type="GO" id="GO:0140741">
    <property type="term" value="F:tRNA-uracil-4 sulfurtransferase activity"/>
    <property type="evidence" value="ECO:0007669"/>
    <property type="project" value="UniProtKB-EC"/>
</dbReference>
<dbReference type="GO" id="GO:0009228">
    <property type="term" value="P:thiamine biosynthetic process"/>
    <property type="evidence" value="ECO:0007669"/>
    <property type="project" value="UniProtKB-KW"/>
</dbReference>
<dbReference type="GO" id="GO:0009229">
    <property type="term" value="P:thiamine diphosphate biosynthetic process"/>
    <property type="evidence" value="ECO:0007669"/>
    <property type="project" value="UniProtKB-UniRule"/>
</dbReference>
<dbReference type="GO" id="GO:0052837">
    <property type="term" value="P:thiazole biosynthetic process"/>
    <property type="evidence" value="ECO:0007669"/>
    <property type="project" value="TreeGrafter"/>
</dbReference>
<dbReference type="GO" id="GO:0002937">
    <property type="term" value="P:tRNA 4-thiouridine biosynthesis"/>
    <property type="evidence" value="ECO:0007669"/>
    <property type="project" value="TreeGrafter"/>
</dbReference>
<dbReference type="CDD" id="cd01712">
    <property type="entry name" value="PPase_ThiI"/>
    <property type="match status" value="1"/>
</dbReference>
<dbReference type="CDD" id="cd11716">
    <property type="entry name" value="THUMP_ThiI"/>
    <property type="match status" value="1"/>
</dbReference>
<dbReference type="FunFam" id="3.30.2130.30:FF:000009">
    <property type="entry name" value="Probable tRNA sulfurtransferase"/>
    <property type="match status" value="1"/>
</dbReference>
<dbReference type="FunFam" id="3.40.50.620:FF:000053">
    <property type="entry name" value="Probable tRNA sulfurtransferase"/>
    <property type="match status" value="1"/>
</dbReference>
<dbReference type="Gene3D" id="3.30.2130.30">
    <property type="match status" value="1"/>
</dbReference>
<dbReference type="Gene3D" id="3.40.50.620">
    <property type="entry name" value="HUPs"/>
    <property type="match status" value="1"/>
</dbReference>
<dbReference type="HAMAP" id="MF_00021">
    <property type="entry name" value="ThiI"/>
    <property type="match status" value="1"/>
</dbReference>
<dbReference type="InterPro" id="IPR014729">
    <property type="entry name" value="Rossmann-like_a/b/a_fold"/>
</dbReference>
<dbReference type="InterPro" id="IPR020536">
    <property type="entry name" value="ThiI_AANH"/>
</dbReference>
<dbReference type="InterPro" id="IPR054173">
    <property type="entry name" value="ThiI_fer"/>
</dbReference>
<dbReference type="InterPro" id="IPR049961">
    <property type="entry name" value="ThiI_N"/>
</dbReference>
<dbReference type="InterPro" id="IPR004114">
    <property type="entry name" value="THUMP_dom"/>
</dbReference>
<dbReference type="InterPro" id="IPR049962">
    <property type="entry name" value="THUMP_ThiI"/>
</dbReference>
<dbReference type="InterPro" id="IPR003720">
    <property type="entry name" value="tRNA_STrfase"/>
</dbReference>
<dbReference type="InterPro" id="IPR050102">
    <property type="entry name" value="tRNA_sulfurtransferase_ThiI"/>
</dbReference>
<dbReference type="NCBIfam" id="TIGR00342">
    <property type="entry name" value="tRNA uracil 4-sulfurtransferase ThiI"/>
    <property type="match status" value="1"/>
</dbReference>
<dbReference type="PANTHER" id="PTHR43209">
    <property type="entry name" value="TRNA SULFURTRANSFERASE"/>
    <property type="match status" value="1"/>
</dbReference>
<dbReference type="PANTHER" id="PTHR43209:SF1">
    <property type="entry name" value="TRNA SULFURTRANSFERASE"/>
    <property type="match status" value="1"/>
</dbReference>
<dbReference type="Pfam" id="PF02568">
    <property type="entry name" value="ThiI"/>
    <property type="match status" value="1"/>
</dbReference>
<dbReference type="Pfam" id="PF22025">
    <property type="entry name" value="ThiI_fer"/>
    <property type="match status" value="1"/>
</dbReference>
<dbReference type="Pfam" id="PF02926">
    <property type="entry name" value="THUMP"/>
    <property type="match status" value="1"/>
</dbReference>
<dbReference type="SMART" id="SM00981">
    <property type="entry name" value="THUMP"/>
    <property type="match status" value="1"/>
</dbReference>
<dbReference type="SUPFAM" id="SSF52402">
    <property type="entry name" value="Adenine nucleotide alpha hydrolases-like"/>
    <property type="match status" value="1"/>
</dbReference>
<dbReference type="SUPFAM" id="SSF143437">
    <property type="entry name" value="THUMP domain-like"/>
    <property type="match status" value="1"/>
</dbReference>
<dbReference type="PROSITE" id="PS51165">
    <property type="entry name" value="THUMP"/>
    <property type="match status" value="1"/>
</dbReference>
<reference key="1">
    <citation type="journal article" date="2001" name="Lancet">
        <title>Whole genome sequencing of meticillin-resistant Staphylococcus aureus.</title>
        <authorList>
            <person name="Kuroda M."/>
            <person name="Ohta T."/>
            <person name="Uchiyama I."/>
            <person name="Baba T."/>
            <person name="Yuzawa H."/>
            <person name="Kobayashi I."/>
            <person name="Cui L."/>
            <person name="Oguchi A."/>
            <person name="Aoki K."/>
            <person name="Nagai Y."/>
            <person name="Lian J.-Q."/>
            <person name="Ito T."/>
            <person name="Kanamori M."/>
            <person name="Matsumaru H."/>
            <person name="Maruyama A."/>
            <person name="Murakami H."/>
            <person name="Hosoyama A."/>
            <person name="Mizutani-Ui Y."/>
            <person name="Takahashi N.K."/>
            <person name="Sawano T."/>
            <person name="Inoue R."/>
            <person name="Kaito C."/>
            <person name="Sekimizu K."/>
            <person name="Hirakawa H."/>
            <person name="Kuhara S."/>
            <person name="Goto S."/>
            <person name="Yabuzaki J."/>
            <person name="Kanehisa M."/>
            <person name="Yamashita A."/>
            <person name="Oshima K."/>
            <person name="Furuya K."/>
            <person name="Yoshino C."/>
            <person name="Shiba T."/>
            <person name="Hattori M."/>
            <person name="Ogasawara N."/>
            <person name="Hayashi H."/>
            <person name="Hiramatsu K."/>
        </authorList>
    </citation>
    <scope>NUCLEOTIDE SEQUENCE [LARGE SCALE GENOMIC DNA]</scope>
    <source>
        <strain>N315</strain>
    </source>
</reference>
<accession>Q99TE8</accession>
<proteinExistence type="inferred from homology"/>
<gene>
    <name evidence="1" type="primary">thiI</name>
    <name type="ordered locus">SA1537</name>
</gene>
<feature type="chain" id="PRO_0000154865" description="Probable tRNA sulfurtransferase">
    <location>
        <begin position="1"/>
        <end position="407"/>
    </location>
</feature>
<feature type="domain" description="THUMP" evidence="1">
    <location>
        <begin position="61"/>
        <end position="165"/>
    </location>
</feature>
<feature type="binding site" evidence="1">
    <location>
        <begin position="183"/>
        <end position="184"/>
    </location>
    <ligand>
        <name>ATP</name>
        <dbReference type="ChEBI" id="CHEBI:30616"/>
    </ligand>
</feature>
<feature type="binding site" evidence="1">
    <location>
        <begin position="208"/>
        <end position="209"/>
    </location>
    <ligand>
        <name>ATP</name>
        <dbReference type="ChEBI" id="CHEBI:30616"/>
    </ligand>
</feature>
<feature type="binding site" evidence="1">
    <location>
        <position position="265"/>
    </location>
    <ligand>
        <name>ATP</name>
        <dbReference type="ChEBI" id="CHEBI:30616"/>
    </ligand>
</feature>
<feature type="binding site" evidence="1">
    <location>
        <position position="287"/>
    </location>
    <ligand>
        <name>ATP</name>
        <dbReference type="ChEBI" id="CHEBI:30616"/>
    </ligand>
</feature>
<feature type="binding site" evidence="1">
    <location>
        <position position="296"/>
    </location>
    <ligand>
        <name>ATP</name>
        <dbReference type="ChEBI" id="CHEBI:30616"/>
    </ligand>
</feature>